<reference key="1">
    <citation type="journal article" date="1972" name="Eur. J. Biochem.">
        <title>Phylogeny of the neurohypophysial hormones. Two new active peptides isolated from a cartilaginous fish, Squalus acanthias.</title>
        <authorList>
            <person name="Acher R."/>
            <person name="Chauvet J."/>
            <person name="Chauvet M.-T."/>
        </authorList>
    </citation>
    <scope>PROTEIN SEQUENCE</scope>
</reference>
<reference key="2">
    <citation type="journal article" date="1972" name="C. R. Hebd. Seances Acad. Sci., D, Sci. Nat.">
        <title>Identification of 2 new neurohypophyseal hormones, valitocin (Val8-oxytocin) and aspartocin (Asn4-oxytocin) in a selachian fish, the spiny dog-fish (Squalus acanthias).</title>
        <authorList>
            <person name="Acher R."/>
            <person name="Chauvet J."/>
            <person name="Chauvet M.-T."/>
            <person name="Fontaine M."/>
        </authorList>
    </citation>
    <scope>PROTEIN SEQUENCE</scope>
    <scope>AMIDATION AT GLY-9</scope>
</reference>
<accession>P43000</accession>
<keyword id="KW-0027">Amidation</keyword>
<keyword id="KW-0903">Direct protein sequencing</keyword>
<keyword id="KW-1015">Disulfide bond</keyword>
<keyword id="KW-0372">Hormone</keyword>
<keyword id="KW-0964">Secreted</keyword>
<comment type="subcellular location">
    <subcellularLocation>
        <location>Secreted</location>
    </subcellularLocation>
</comment>
<comment type="similarity">
    <text evidence="2">Belongs to the vasopressin/oxytocin family.</text>
</comment>
<protein>
    <recommendedName>
        <fullName>Valitocin</fullName>
    </recommendedName>
</protein>
<evidence type="ECO:0000269" key="1">
    <source>
    </source>
</evidence>
<evidence type="ECO:0000305" key="2"/>
<dbReference type="GO" id="GO:0005576">
    <property type="term" value="C:extracellular region"/>
    <property type="evidence" value="ECO:0007669"/>
    <property type="project" value="UniProtKB-SubCell"/>
</dbReference>
<dbReference type="GO" id="GO:0005185">
    <property type="term" value="F:neurohypophyseal hormone activity"/>
    <property type="evidence" value="ECO:0007669"/>
    <property type="project" value="InterPro"/>
</dbReference>
<dbReference type="InterPro" id="IPR022423">
    <property type="entry name" value="Neurohypophysial_hormone_CS"/>
</dbReference>
<dbReference type="PROSITE" id="PS00264">
    <property type="entry name" value="NEUROHYPOPHYS_HORM"/>
    <property type="match status" value="1"/>
</dbReference>
<sequence>CYIQNCPVG</sequence>
<organism>
    <name type="scientific">Squalus acanthias</name>
    <name type="common">Spiny dogfish</name>
    <dbReference type="NCBI Taxonomy" id="7797"/>
    <lineage>
        <taxon>Eukaryota</taxon>
        <taxon>Metazoa</taxon>
        <taxon>Chordata</taxon>
        <taxon>Craniata</taxon>
        <taxon>Vertebrata</taxon>
        <taxon>Chondrichthyes</taxon>
        <taxon>Elasmobranchii</taxon>
        <taxon>Squalomorphii</taxon>
        <taxon>Squaliformes</taxon>
        <taxon>Squalidae</taxon>
        <taxon>Squalus</taxon>
    </lineage>
</organism>
<name>OXYV_SQUAC</name>
<proteinExistence type="evidence at protein level"/>
<feature type="peptide" id="PRO_0000044095" description="Valitocin">
    <location>
        <begin position="1"/>
        <end position="9"/>
    </location>
</feature>
<feature type="modified residue" description="Glycine amide" evidence="1">
    <location>
        <position position="9"/>
    </location>
</feature>
<feature type="disulfide bond">
    <location>
        <begin position="1"/>
        <end position="6"/>
    </location>
</feature>